<dbReference type="EC" id="2.7.7.1"/>
<dbReference type="EC" id="2.7.7.18"/>
<dbReference type="EMBL" id="Z81516">
    <property type="protein sequence ID" value="CAB04200.1"/>
    <property type="molecule type" value="Genomic_DNA"/>
</dbReference>
<dbReference type="PIR" id="T21437">
    <property type="entry name" value="T21437"/>
</dbReference>
<dbReference type="RefSeq" id="NP_492480.1">
    <property type="nucleotide sequence ID" value="NM_060079.4"/>
</dbReference>
<dbReference type="SMR" id="P91851"/>
<dbReference type="FunCoup" id="P91851">
    <property type="interactions" value="2439"/>
</dbReference>
<dbReference type="STRING" id="6239.F26H9.4.1"/>
<dbReference type="SwissPalm" id="P91851"/>
<dbReference type="PaxDb" id="6239-F26H9.4"/>
<dbReference type="PeptideAtlas" id="P91851"/>
<dbReference type="EnsemblMetazoa" id="F26H9.4.1">
    <property type="protein sequence ID" value="F26H9.4.1"/>
    <property type="gene ID" value="WBGene00009176"/>
</dbReference>
<dbReference type="GeneID" id="172754"/>
<dbReference type="KEGG" id="cel:CELE_F26H9.4"/>
<dbReference type="UCSC" id="F26H9.4">
    <property type="organism name" value="c. elegans"/>
</dbReference>
<dbReference type="AGR" id="WB:WBGene00009176"/>
<dbReference type="CTD" id="172754"/>
<dbReference type="WormBase" id="F26H9.4">
    <property type="protein sequence ID" value="CE09709"/>
    <property type="gene ID" value="WBGene00009176"/>
    <property type="gene designation" value="nmat-2"/>
</dbReference>
<dbReference type="eggNOG" id="KOG3199">
    <property type="taxonomic scope" value="Eukaryota"/>
</dbReference>
<dbReference type="GeneTree" id="ENSGT00950000183179"/>
<dbReference type="HOGENOM" id="CLU_033366_3_2_1"/>
<dbReference type="InParanoid" id="P91851"/>
<dbReference type="OMA" id="HFDYELN"/>
<dbReference type="OrthoDB" id="422187at2759"/>
<dbReference type="PhylomeDB" id="P91851"/>
<dbReference type="Reactome" id="R-CEL-196807">
    <property type="pathway name" value="Nicotinate metabolism"/>
</dbReference>
<dbReference type="UniPathway" id="UPA00253">
    <property type="reaction ID" value="UER00332"/>
</dbReference>
<dbReference type="UniPathway" id="UPA00253">
    <property type="reaction ID" value="UER00600"/>
</dbReference>
<dbReference type="PRO" id="PR:P91851"/>
<dbReference type="Proteomes" id="UP000001940">
    <property type="component" value="Chromosome I"/>
</dbReference>
<dbReference type="Bgee" id="WBGene00009176">
    <property type="expression patterns" value="Expressed in germ line (C elegans) and 4 other cell types or tissues"/>
</dbReference>
<dbReference type="GO" id="GO:0005524">
    <property type="term" value="F:ATP binding"/>
    <property type="evidence" value="ECO:0007669"/>
    <property type="project" value="UniProtKB-KW"/>
</dbReference>
<dbReference type="GO" id="GO:0000309">
    <property type="term" value="F:nicotinamide-nucleotide adenylyltransferase activity"/>
    <property type="evidence" value="ECO:0000318"/>
    <property type="project" value="GO_Central"/>
</dbReference>
<dbReference type="GO" id="GO:0004515">
    <property type="term" value="F:nicotinate-nucleotide adenylyltransferase activity"/>
    <property type="evidence" value="ECO:0000318"/>
    <property type="project" value="GO_Central"/>
</dbReference>
<dbReference type="GO" id="GO:0009435">
    <property type="term" value="P:NAD biosynthetic process"/>
    <property type="evidence" value="ECO:0000318"/>
    <property type="project" value="GO_Central"/>
</dbReference>
<dbReference type="CDD" id="cd09286">
    <property type="entry name" value="NMNAT_Eukarya"/>
    <property type="match status" value="1"/>
</dbReference>
<dbReference type="FunFam" id="3.40.50.620:FF:000346">
    <property type="entry name" value="Nicotinamide-nucleotide adenylyltransferase"/>
    <property type="match status" value="1"/>
</dbReference>
<dbReference type="Gene3D" id="3.40.50.620">
    <property type="entry name" value="HUPs"/>
    <property type="match status" value="1"/>
</dbReference>
<dbReference type="InterPro" id="IPR004821">
    <property type="entry name" value="Cyt_trans-like"/>
</dbReference>
<dbReference type="InterPro" id="IPR051182">
    <property type="entry name" value="Euk_NMN_adenylyltrnsfrase"/>
</dbReference>
<dbReference type="InterPro" id="IPR005248">
    <property type="entry name" value="NadD/NMNAT"/>
</dbReference>
<dbReference type="InterPro" id="IPR045094">
    <property type="entry name" value="NMNAT_euk"/>
</dbReference>
<dbReference type="InterPro" id="IPR014729">
    <property type="entry name" value="Rossmann-like_a/b/a_fold"/>
</dbReference>
<dbReference type="NCBIfam" id="TIGR00482">
    <property type="entry name" value="nicotinate (nicotinamide) nucleotide adenylyltransferase"/>
    <property type="match status" value="1"/>
</dbReference>
<dbReference type="PANTHER" id="PTHR12039">
    <property type="entry name" value="NICOTINAMIDE MONONUCLEOTIDE ADENYLYLTRANSFERASE"/>
    <property type="match status" value="1"/>
</dbReference>
<dbReference type="PANTHER" id="PTHR12039:SF0">
    <property type="entry name" value="NICOTINAMIDE-NUCLEOTIDE ADENYLYLTRANSFERASE"/>
    <property type="match status" value="1"/>
</dbReference>
<dbReference type="Pfam" id="PF01467">
    <property type="entry name" value="CTP_transf_like"/>
    <property type="match status" value="1"/>
</dbReference>
<dbReference type="SUPFAM" id="SSF52374">
    <property type="entry name" value="Nucleotidylyl transferase"/>
    <property type="match status" value="1"/>
</dbReference>
<protein>
    <recommendedName>
        <fullName evidence="3">Nicotinamide/nicotinic acid mononucleotide adenylyltransferase 2</fullName>
        <shortName>NMN/NaMN adenylyltransferase 2</shortName>
        <ecNumber>2.7.7.1</ecNumber>
        <ecNumber>2.7.7.18</ecNumber>
    </recommendedName>
    <alternativeName>
        <fullName>Nicotinamide mononucleotide adenylyltransferase 2</fullName>
        <shortName>NMN adenylyltransferase 2</shortName>
    </alternativeName>
    <alternativeName>
        <fullName>Nicotinate-nucleotide adenylyltransferase 2</fullName>
        <shortName>NaMN adenylyltransferase 2</shortName>
    </alternativeName>
</protein>
<evidence type="ECO:0000250" key="1">
    <source>
        <dbReference type="UniProtKB" id="Q96T66"/>
    </source>
</evidence>
<evidence type="ECO:0000250" key="2">
    <source>
        <dbReference type="UniProtKB" id="Q9HAN9"/>
    </source>
</evidence>
<evidence type="ECO:0000305" key="3"/>
<evidence type="ECO:0000312" key="4">
    <source>
        <dbReference type="WormBase" id="F26H9.4"/>
    </source>
</evidence>
<reference key="1">
    <citation type="journal article" date="1998" name="Science">
        <title>Genome sequence of the nematode C. elegans: a platform for investigating biology.</title>
        <authorList>
            <consortium name="The C. elegans sequencing consortium"/>
        </authorList>
    </citation>
    <scope>NUCLEOTIDE SEQUENCE [LARGE SCALE GENOMIC DNA]</scope>
    <source>
        <strain>Bristol N2</strain>
    </source>
</reference>
<keyword id="KW-0067">ATP-binding</keyword>
<keyword id="KW-0520">NAD</keyword>
<keyword id="KW-0547">Nucleotide-binding</keyword>
<keyword id="KW-0548">Nucleotidyltransferase</keyword>
<keyword id="KW-0662">Pyridine nucleotide biosynthesis</keyword>
<keyword id="KW-1185">Reference proteome</keyword>
<keyword id="KW-0808">Transferase</keyword>
<proteinExistence type="inferred from homology"/>
<sequence>MKRVALLAVGSFNPPTIAHLRMLEVARSHLETINTQVVEGIMSPVADSYNNKPTLIKSNFRIQMVRAATKSSDWIRADDWECTRTTWTRTIDVLRHHRELVQEKFGSDVGMMLVVGGDVVDSFTRILPDGSNLWNSSDIRTIITEFGLIVLSREGSNPLNTIQSMPAISEFCDRIIQVKDEVCPSGVSSTRLRAAIMNKKSIKYSTPDEVINFIRENNLYQKI</sequence>
<comment type="function">
    <text evidence="2">Catalyzes the formation of NAD(+) from nicotinamide mononucleotide (NMN) and ATP. Can also use the deamidated form; nicotinic acid mononucleotide (NaMN) as substrate.</text>
</comment>
<comment type="catalytic activity">
    <reaction evidence="2">
        <text>beta-nicotinamide D-ribonucleotide + ATP + H(+) = diphosphate + NAD(+)</text>
        <dbReference type="Rhea" id="RHEA:21360"/>
        <dbReference type="ChEBI" id="CHEBI:14649"/>
        <dbReference type="ChEBI" id="CHEBI:15378"/>
        <dbReference type="ChEBI" id="CHEBI:30616"/>
        <dbReference type="ChEBI" id="CHEBI:33019"/>
        <dbReference type="ChEBI" id="CHEBI:57540"/>
        <dbReference type="EC" id="2.7.7.1"/>
    </reaction>
</comment>
<comment type="catalytic activity">
    <reaction evidence="2">
        <text>nicotinate beta-D-ribonucleotide + ATP + H(+) = deamido-NAD(+) + diphosphate</text>
        <dbReference type="Rhea" id="RHEA:22860"/>
        <dbReference type="ChEBI" id="CHEBI:15378"/>
        <dbReference type="ChEBI" id="CHEBI:30616"/>
        <dbReference type="ChEBI" id="CHEBI:33019"/>
        <dbReference type="ChEBI" id="CHEBI:57502"/>
        <dbReference type="ChEBI" id="CHEBI:58437"/>
        <dbReference type="EC" id="2.7.7.18"/>
    </reaction>
</comment>
<comment type="cofactor">
    <cofactor evidence="2">
        <name>a divalent metal cation</name>
        <dbReference type="ChEBI" id="CHEBI:60240"/>
    </cofactor>
</comment>
<comment type="pathway">
    <text evidence="2">Cofactor biosynthesis; NAD(+) biosynthesis; deamido-NAD(+) from nicotinate D-ribonucleotide: step 1/1.</text>
</comment>
<comment type="pathway">
    <text evidence="2">Cofactor biosynthesis; NAD(+) biosynthesis; NAD(+) from nicotinamide D-ribonucleotide: step 1/1.</text>
</comment>
<comment type="similarity">
    <text evidence="3">Belongs to the eukaryotic NMN adenylyltransferase family.</text>
</comment>
<feature type="chain" id="PRO_0000135020" description="Nicotinamide/nicotinic acid mononucleotide adenylyltransferase 2">
    <location>
        <begin position="1"/>
        <end position="223"/>
    </location>
</feature>
<feature type="binding site" evidence="1">
    <location>
        <position position="11"/>
    </location>
    <ligand>
        <name>NAD(+)</name>
        <dbReference type="ChEBI" id="CHEBI:57540"/>
    </ligand>
</feature>
<feature type="binding site" evidence="1">
    <location>
        <position position="12"/>
    </location>
    <ligand>
        <name>NAD(+)</name>
        <dbReference type="ChEBI" id="CHEBI:57540"/>
    </ligand>
</feature>
<feature type="binding site" description="in other chain" evidence="1">
    <location>
        <position position="19"/>
    </location>
    <ligand>
        <name>ATP</name>
        <dbReference type="ChEBI" id="CHEBI:30616"/>
        <note>ligand shared between dimeric partners</note>
    </ligand>
</feature>
<feature type="binding site" evidence="1">
    <location>
        <position position="87"/>
    </location>
    <ligand>
        <name>NAD(+)</name>
        <dbReference type="ChEBI" id="CHEBI:57540"/>
    </ligand>
</feature>
<feature type="binding site" evidence="1">
    <location>
        <position position="90"/>
    </location>
    <ligand>
        <name>NAD(+)</name>
        <dbReference type="ChEBI" id="CHEBI:57540"/>
    </ligand>
</feature>
<feature type="binding site" evidence="1">
    <location>
        <position position="116"/>
    </location>
    <ligand>
        <name>NAD(+)</name>
        <dbReference type="ChEBI" id="CHEBI:57540"/>
    </ligand>
</feature>
<feature type="binding site" evidence="1">
    <location>
        <position position="118"/>
    </location>
    <ligand>
        <name>NAD(+)</name>
        <dbReference type="ChEBI" id="CHEBI:57540"/>
    </ligand>
</feature>
<feature type="binding site" evidence="1">
    <location>
        <position position="133"/>
    </location>
    <ligand>
        <name>NAD(+)</name>
        <dbReference type="ChEBI" id="CHEBI:57540"/>
    </ligand>
</feature>
<feature type="binding site" evidence="1">
    <location>
        <position position="134"/>
    </location>
    <ligand>
        <name>NAD(+)</name>
        <dbReference type="ChEBI" id="CHEBI:57540"/>
    </ligand>
</feature>
<feature type="binding site" evidence="1">
    <location>
        <position position="153"/>
    </location>
    <ligand>
        <name>NAD(+)</name>
        <dbReference type="ChEBI" id="CHEBI:57540"/>
    </ligand>
</feature>
<feature type="binding site" description="in other chain" evidence="1">
    <location>
        <begin position="190"/>
        <end position="191"/>
    </location>
    <ligand>
        <name>ATP</name>
        <dbReference type="ChEBI" id="CHEBI:30616"/>
        <note>ligand shared between dimeric partners</note>
    </ligand>
</feature>
<name>NMNA2_CAEEL</name>
<accession>P91851</accession>
<organism>
    <name type="scientific">Caenorhabditis elegans</name>
    <dbReference type="NCBI Taxonomy" id="6239"/>
    <lineage>
        <taxon>Eukaryota</taxon>
        <taxon>Metazoa</taxon>
        <taxon>Ecdysozoa</taxon>
        <taxon>Nematoda</taxon>
        <taxon>Chromadorea</taxon>
        <taxon>Rhabditida</taxon>
        <taxon>Rhabditina</taxon>
        <taxon>Rhabditomorpha</taxon>
        <taxon>Rhabditoidea</taxon>
        <taxon>Rhabditidae</taxon>
        <taxon>Peloderinae</taxon>
        <taxon>Caenorhabditis</taxon>
    </lineage>
</organism>
<gene>
    <name evidence="4" type="primary">nmat-2</name>
    <name type="ORF">F26H9.4</name>
</gene>